<feature type="chain" id="PRO_0000083829" description="Malate dehydrogenase">
    <location>
        <begin position="1"/>
        <end position="360"/>
    </location>
</feature>
<feature type="strand" evidence="3">
    <location>
        <begin position="11"/>
        <end position="14"/>
    </location>
</feature>
<feature type="helix" evidence="3">
    <location>
        <begin position="16"/>
        <end position="29"/>
    </location>
</feature>
<feature type="helix" evidence="3">
    <location>
        <begin position="34"/>
        <end position="49"/>
    </location>
</feature>
<feature type="helix" evidence="3">
    <location>
        <begin position="53"/>
        <end position="55"/>
    </location>
</feature>
<feature type="helix" evidence="3">
    <location>
        <begin position="57"/>
        <end position="59"/>
    </location>
</feature>
<feature type="helix" evidence="3">
    <location>
        <begin position="60"/>
        <end position="68"/>
    </location>
</feature>
<feature type="strand" evidence="3">
    <location>
        <begin position="71"/>
        <end position="75"/>
    </location>
</feature>
<feature type="strand" evidence="3">
    <location>
        <begin position="79"/>
        <end position="84"/>
    </location>
</feature>
<feature type="strand" evidence="3">
    <location>
        <begin position="87"/>
        <end position="91"/>
    </location>
</feature>
<feature type="helix" evidence="3">
    <location>
        <begin position="97"/>
        <end position="115"/>
    </location>
</feature>
<feature type="strand" evidence="3">
    <location>
        <begin position="116"/>
        <end position="125"/>
    </location>
</feature>
<feature type="helix" evidence="3">
    <location>
        <begin position="132"/>
        <end position="139"/>
    </location>
</feature>
<feature type="turn" evidence="3">
    <location>
        <begin position="140"/>
        <end position="142"/>
    </location>
</feature>
<feature type="strand" evidence="3">
    <location>
        <begin position="143"/>
        <end position="149"/>
    </location>
</feature>
<feature type="strand" evidence="3">
    <location>
        <begin position="170"/>
        <end position="174"/>
    </location>
</feature>
<feature type="strand" evidence="3">
    <location>
        <begin position="177"/>
        <end position="179"/>
    </location>
</feature>
<feature type="strand" evidence="3">
    <location>
        <begin position="181"/>
        <end position="185"/>
    </location>
</feature>
<feature type="strand" evidence="3">
    <location>
        <begin position="187"/>
        <end position="190"/>
    </location>
</feature>
<feature type="turn" evidence="3">
    <location>
        <begin position="192"/>
        <end position="194"/>
    </location>
</feature>
<feature type="strand" evidence="3">
    <location>
        <begin position="215"/>
        <end position="217"/>
    </location>
</feature>
<feature type="turn" evidence="3">
    <location>
        <begin position="223"/>
        <end position="227"/>
    </location>
</feature>
<feature type="strand" evidence="3">
    <location>
        <begin position="236"/>
        <end position="238"/>
    </location>
</feature>
<feature type="helix" evidence="3">
    <location>
        <begin position="242"/>
        <end position="256"/>
    </location>
</feature>
<feature type="turn" evidence="3">
    <location>
        <begin position="257"/>
        <end position="261"/>
    </location>
</feature>
<feature type="helix" evidence="3">
    <location>
        <begin position="265"/>
        <end position="267"/>
    </location>
</feature>
<feature type="strand" evidence="3">
    <location>
        <begin position="278"/>
        <end position="285"/>
    </location>
</feature>
<feature type="helix" evidence="3">
    <location>
        <begin position="287"/>
        <end position="289"/>
    </location>
</feature>
<feature type="helix" evidence="3">
    <location>
        <begin position="293"/>
        <end position="308"/>
    </location>
</feature>
<feature type="helix" evidence="3">
    <location>
        <begin position="324"/>
        <end position="336"/>
    </location>
</feature>
<feature type="strand" evidence="3">
    <location>
        <begin position="338"/>
        <end position="341"/>
    </location>
</feature>
<feature type="helix" evidence="3">
    <location>
        <begin position="342"/>
        <end position="355"/>
    </location>
</feature>
<keyword id="KW-0002">3D-structure</keyword>
<keyword id="KW-0963">Cytoplasm</keyword>
<keyword id="KW-0520">NAD</keyword>
<keyword id="KW-0560">Oxidoreductase</keyword>
<keyword id="KW-0816">Tricarboxylic acid cycle</keyword>
<reference key="1">
    <citation type="journal article" date="1998" name="DNA Res.">
        <title>Complete sequence and gene organization of the genome of a hyper-thermophilic archaebacterium, Pyrococcus horikoshii OT3.</title>
        <authorList>
            <person name="Kawarabayasi Y."/>
            <person name="Sawada M."/>
            <person name="Horikawa H."/>
            <person name="Haikawa Y."/>
            <person name="Hino Y."/>
            <person name="Yamamoto S."/>
            <person name="Sekine M."/>
            <person name="Baba S."/>
            <person name="Kosugi H."/>
            <person name="Hosoyama A."/>
            <person name="Nagai Y."/>
            <person name="Sakai M."/>
            <person name="Ogura K."/>
            <person name="Otsuka R."/>
            <person name="Nakazawa H."/>
            <person name="Takamiya M."/>
            <person name="Ohfuku Y."/>
            <person name="Funahashi T."/>
            <person name="Tanaka T."/>
            <person name="Kudoh Y."/>
            <person name="Yamazaki J."/>
            <person name="Kushida N."/>
            <person name="Oguchi A."/>
            <person name="Aoki K."/>
            <person name="Yoshizawa T."/>
            <person name="Nakamura Y."/>
            <person name="Robb F.T."/>
            <person name="Horikoshi K."/>
            <person name="Masuchi Y."/>
            <person name="Shizuya H."/>
            <person name="Kikuchi H."/>
        </authorList>
    </citation>
    <scope>NUCLEOTIDE SEQUENCE [LARGE SCALE GENOMIC DNA]</scope>
    <source>
        <strain>ATCC 700860 / DSM 12428 / JCM 9974 / NBRC 100139 / OT-3</strain>
    </source>
</reference>
<name>MDH_PYRHO</name>
<sequence>MFEKGYVDENYIRVPKDRLFSFIVRVLTKLGVPEEDAKIVADNLVMADLRGVESHGVQRLKRYVDGIISGGVNLHPKIRVIREGPSYALIDGDEGLGQVVGYRSMKLAIKKAKDTGIGIVIARNSNHYGIAGYYALMAAEEGMIGISMTNSRPLVAPTGGIERILGTNPIALAAPTKDKPFLLDMATSVVPIGKLEVYRRKGKDIPEGWAINREGNITTKVEEVFNGGALLPLGGFGELLGGHKGYGLSLMVDILSGILSGGTWSKYVKNTSEKGSNVCHFFMVIDIEHFIPLEEFKEKISQMIEEIKSSRKHPEFERIWIHGEKGFLTMETRLKLGIPIYRKVLEELNEIAKRVGVEGL</sequence>
<gene>
    <name type="primary">mdh</name>
    <name type="ordered locus">PH1277</name>
</gene>
<proteinExistence type="evidence at protein level"/>
<organism>
    <name type="scientific">Pyrococcus horikoshii (strain ATCC 700860 / DSM 12428 / JCM 9974 / NBRC 100139 / OT-3)</name>
    <dbReference type="NCBI Taxonomy" id="70601"/>
    <lineage>
        <taxon>Archaea</taxon>
        <taxon>Methanobacteriati</taxon>
        <taxon>Methanobacteriota</taxon>
        <taxon>Thermococci</taxon>
        <taxon>Thermococcales</taxon>
        <taxon>Thermococcaceae</taxon>
        <taxon>Pyrococcus</taxon>
    </lineage>
</organism>
<dbReference type="EC" id="1.1.1.37"/>
<dbReference type="EMBL" id="BA000001">
    <property type="protein sequence ID" value="BAA30380.1"/>
    <property type="molecule type" value="Genomic_DNA"/>
</dbReference>
<dbReference type="PIR" id="B71073">
    <property type="entry name" value="B71073"/>
</dbReference>
<dbReference type="RefSeq" id="WP_010885364.1">
    <property type="nucleotide sequence ID" value="NC_000961.1"/>
</dbReference>
<dbReference type="PDB" id="1V9N">
    <property type="method" value="X-ray"/>
    <property type="resolution" value="2.10 A"/>
    <property type="chains" value="A=1-360"/>
</dbReference>
<dbReference type="PDBsum" id="1V9N"/>
<dbReference type="SMR" id="O59028"/>
<dbReference type="STRING" id="70601.gene:9378244"/>
<dbReference type="EnsemblBacteria" id="BAA30380">
    <property type="protein sequence ID" value="BAA30380"/>
    <property type="gene ID" value="BAA30380"/>
</dbReference>
<dbReference type="GeneID" id="1443600"/>
<dbReference type="KEGG" id="pho:PH1277"/>
<dbReference type="eggNOG" id="arCOG04874">
    <property type="taxonomic scope" value="Archaea"/>
</dbReference>
<dbReference type="OrthoDB" id="40552at2157"/>
<dbReference type="EvolutionaryTrace" id="O59028"/>
<dbReference type="Proteomes" id="UP000000752">
    <property type="component" value="Chromosome"/>
</dbReference>
<dbReference type="GO" id="GO:0005737">
    <property type="term" value="C:cytoplasm"/>
    <property type="evidence" value="ECO:0007669"/>
    <property type="project" value="UniProtKB-SubCell"/>
</dbReference>
<dbReference type="GO" id="GO:0030060">
    <property type="term" value="F:L-malate dehydrogenase (NAD+) activity"/>
    <property type="evidence" value="ECO:0007669"/>
    <property type="project" value="UniProtKB-EC"/>
</dbReference>
<dbReference type="GO" id="GO:0006099">
    <property type="term" value="P:tricarboxylic acid cycle"/>
    <property type="evidence" value="ECO:0007669"/>
    <property type="project" value="UniProtKB-KW"/>
</dbReference>
<dbReference type="Gene3D" id="1.10.1530.10">
    <property type="match status" value="1"/>
</dbReference>
<dbReference type="Gene3D" id="3.30.1370.60">
    <property type="entry name" value="Hypothetical oxidoreductase yiak, domain 2"/>
    <property type="match status" value="1"/>
</dbReference>
<dbReference type="InterPro" id="IPR043144">
    <property type="entry name" value="Mal/L-sulf/L-lact_DH-like_ah"/>
</dbReference>
<dbReference type="InterPro" id="IPR043143">
    <property type="entry name" value="Mal/L-sulf/L-lact_DH-like_NADP"/>
</dbReference>
<dbReference type="InterPro" id="IPR036111">
    <property type="entry name" value="Mal/L-sulfo/L-lacto_DH-like_sf"/>
</dbReference>
<dbReference type="InterPro" id="IPR003767">
    <property type="entry name" value="Malate/L-lactate_DH-like"/>
</dbReference>
<dbReference type="PANTHER" id="PTHR11091:SF0">
    <property type="entry name" value="MALATE DEHYDROGENASE"/>
    <property type="match status" value="1"/>
</dbReference>
<dbReference type="PANTHER" id="PTHR11091">
    <property type="entry name" value="OXIDOREDUCTASE-RELATED"/>
    <property type="match status" value="1"/>
</dbReference>
<dbReference type="Pfam" id="PF02615">
    <property type="entry name" value="Ldh_2"/>
    <property type="match status" value="1"/>
</dbReference>
<dbReference type="SUPFAM" id="SSF89733">
    <property type="entry name" value="L-sulfolactate dehydrogenase-like"/>
    <property type="match status" value="1"/>
</dbReference>
<evidence type="ECO:0000250" key="1"/>
<evidence type="ECO:0000305" key="2"/>
<evidence type="ECO:0007829" key="3">
    <source>
        <dbReference type="PDB" id="1V9N"/>
    </source>
</evidence>
<comment type="catalytic activity">
    <reaction>
        <text>(S)-malate + NAD(+) = oxaloacetate + NADH + H(+)</text>
        <dbReference type="Rhea" id="RHEA:21432"/>
        <dbReference type="ChEBI" id="CHEBI:15378"/>
        <dbReference type="ChEBI" id="CHEBI:15589"/>
        <dbReference type="ChEBI" id="CHEBI:16452"/>
        <dbReference type="ChEBI" id="CHEBI:57540"/>
        <dbReference type="ChEBI" id="CHEBI:57945"/>
        <dbReference type="EC" id="1.1.1.37"/>
    </reaction>
</comment>
<comment type="subunit">
    <text evidence="1">Homodimer.</text>
</comment>
<comment type="subcellular location">
    <subcellularLocation>
        <location evidence="2">Cytoplasm</location>
    </subcellularLocation>
</comment>
<comment type="similarity">
    <text evidence="2">Belongs to the LDH2/MDH2 oxidoreductase family.</text>
</comment>
<accession>O59028</accession>
<protein>
    <recommendedName>
        <fullName>Malate dehydrogenase</fullName>
        <ecNumber>1.1.1.37</ecNumber>
    </recommendedName>
</protein>